<reference key="1">
    <citation type="journal article" date="2002" name="J. Bacteriol.">
        <title>Whole-genome comparison of Mycobacterium tuberculosis clinical and laboratory strains.</title>
        <authorList>
            <person name="Fleischmann R.D."/>
            <person name="Alland D."/>
            <person name="Eisen J.A."/>
            <person name="Carpenter L."/>
            <person name="White O."/>
            <person name="Peterson J.D."/>
            <person name="DeBoy R.T."/>
            <person name="Dodson R.J."/>
            <person name="Gwinn M.L."/>
            <person name="Haft D.H."/>
            <person name="Hickey E.K."/>
            <person name="Kolonay J.F."/>
            <person name="Nelson W.C."/>
            <person name="Umayam L.A."/>
            <person name="Ermolaeva M.D."/>
            <person name="Salzberg S.L."/>
            <person name="Delcher A."/>
            <person name="Utterback T.R."/>
            <person name="Weidman J.F."/>
            <person name="Khouri H.M."/>
            <person name="Gill J."/>
            <person name="Mikula A."/>
            <person name="Bishai W."/>
            <person name="Jacobs W.R. Jr."/>
            <person name="Venter J.C."/>
            <person name="Fraser C.M."/>
        </authorList>
    </citation>
    <scope>NUCLEOTIDE SEQUENCE [LARGE SCALE GENOMIC DNA]</scope>
    <source>
        <strain>CDC 1551 / Oshkosh</strain>
    </source>
</reference>
<dbReference type="EC" id="2.3.1.20" evidence="1"/>
<dbReference type="EMBL" id="AE000516">
    <property type="protein sequence ID" value="AAK46080.1"/>
    <property type="status" value="ALT_INIT"/>
    <property type="molecule type" value="Genomic_DNA"/>
</dbReference>
<dbReference type="PIR" id="A70988">
    <property type="entry name" value="A70988"/>
</dbReference>
<dbReference type="SMR" id="P9WKB8"/>
<dbReference type="KEGG" id="mtc:MT1809"/>
<dbReference type="PATRIC" id="fig|83331.31.peg.1944"/>
<dbReference type="HOGENOM" id="CLU_024186_4_2_11"/>
<dbReference type="UniPathway" id="UPA00282"/>
<dbReference type="Proteomes" id="UP000001020">
    <property type="component" value="Chromosome"/>
</dbReference>
<dbReference type="GO" id="GO:0005886">
    <property type="term" value="C:plasma membrane"/>
    <property type="evidence" value="ECO:0007669"/>
    <property type="project" value="TreeGrafter"/>
</dbReference>
<dbReference type="GO" id="GO:0004144">
    <property type="term" value="F:diacylglycerol O-acyltransferase activity"/>
    <property type="evidence" value="ECO:0007669"/>
    <property type="project" value="UniProtKB-EC"/>
</dbReference>
<dbReference type="GO" id="GO:0051701">
    <property type="term" value="P:biological process involved in interaction with host"/>
    <property type="evidence" value="ECO:0007669"/>
    <property type="project" value="TreeGrafter"/>
</dbReference>
<dbReference type="GO" id="GO:0006071">
    <property type="term" value="P:glycerol metabolic process"/>
    <property type="evidence" value="ECO:0007669"/>
    <property type="project" value="UniProtKB-KW"/>
</dbReference>
<dbReference type="GO" id="GO:0001666">
    <property type="term" value="P:response to hypoxia"/>
    <property type="evidence" value="ECO:0007669"/>
    <property type="project" value="TreeGrafter"/>
</dbReference>
<dbReference type="GO" id="GO:0071731">
    <property type="term" value="P:response to nitric oxide"/>
    <property type="evidence" value="ECO:0007669"/>
    <property type="project" value="TreeGrafter"/>
</dbReference>
<dbReference type="GO" id="GO:0019432">
    <property type="term" value="P:triglyceride biosynthetic process"/>
    <property type="evidence" value="ECO:0007669"/>
    <property type="project" value="UniProtKB-UniPathway"/>
</dbReference>
<dbReference type="FunFam" id="3.30.559.10:FF:000061">
    <property type="entry name" value="Diacylglycerol O-acyltransferase"/>
    <property type="match status" value="1"/>
</dbReference>
<dbReference type="Gene3D" id="3.30.559.10">
    <property type="entry name" value="Chloramphenicol acetyltransferase-like domain"/>
    <property type="match status" value="1"/>
</dbReference>
<dbReference type="InterPro" id="IPR014292">
    <property type="entry name" value="Acyl_transf_WS/DGAT"/>
</dbReference>
<dbReference type="InterPro" id="IPR023213">
    <property type="entry name" value="CAT-like_dom_sf"/>
</dbReference>
<dbReference type="InterPro" id="IPR045034">
    <property type="entry name" value="O-acyltransferase_WSD1-like"/>
</dbReference>
<dbReference type="InterPro" id="IPR009721">
    <property type="entry name" value="O-acyltransferase_WSD1_C"/>
</dbReference>
<dbReference type="InterPro" id="IPR004255">
    <property type="entry name" value="O-acyltransferase_WSD1_N"/>
</dbReference>
<dbReference type="NCBIfam" id="TIGR02946">
    <property type="entry name" value="acyl_WS_DGAT"/>
    <property type="match status" value="1"/>
</dbReference>
<dbReference type="PANTHER" id="PTHR31650">
    <property type="entry name" value="O-ACYLTRANSFERASE (WSD1-LIKE) FAMILY PROTEIN"/>
    <property type="match status" value="1"/>
</dbReference>
<dbReference type="PANTHER" id="PTHR31650:SF1">
    <property type="entry name" value="WAX ESTER SYNTHASE_DIACYLGLYCEROL ACYLTRANSFERASE 4-RELATED"/>
    <property type="match status" value="1"/>
</dbReference>
<dbReference type="Pfam" id="PF06974">
    <property type="entry name" value="WS_DGAT_C"/>
    <property type="match status" value="1"/>
</dbReference>
<dbReference type="Pfam" id="PF03007">
    <property type="entry name" value="WS_DGAT_cat"/>
    <property type="match status" value="1"/>
</dbReference>
<dbReference type="SUPFAM" id="SSF52777">
    <property type="entry name" value="CoA-dependent acyltransferases"/>
    <property type="match status" value="1"/>
</dbReference>
<feature type="chain" id="PRO_0000427681" description="Putative diacyglycerol O-acyltransferase MT1809">
    <location>
        <begin position="1"/>
        <end position="502"/>
    </location>
</feature>
<feature type="active site" description="Proton acceptor" evidence="2">
    <location>
        <position position="174"/>
    </location>
</feature>
<comment type="catalytic activity">
    <reaction evidence="1">
        <text>an acyl-CoA + a 1,2-diacyl-sn-glycerol = a triacyl-sn-glycerol + CoA</text>
        <dbReference type="Rhea" id="RHEA:10868"/>
        <dbReference type="ChEBI" id="CHEBI:17815"/>
        <dbReference type="ChEBI" id="CHEBI:57287"/>
        <dbReference type="ChEBI" id="CHEBI:58342"/>
        <dbReference type="ChEBI" id="CHEBI:64615"/>
        <dbReference type="EC" id="2.3.1.20"/>
    </reaction>
</comment>
<comment type="pathway">
    <text>Glycerolipid metabolism; triacylglycerol biosynthesis.</text>
</comment>
<comment type="similarity">
    <text evidence="3">Belongs to the long-chain O-acyltransferase family.</text>
</comment>
<comment type="sequence caution" evidence="3">
    <conflict type="erroneous initiation">
        <sequence resource="EMBL-CDS" id="AAK46080"/>
    </conflict>
    <text>Extended N-terminus.</text>
</comment>
<protein>
    <recommendedName>
        <fullName>Putative diacyglycerol O-acyltransferase MT1809</fullName>
        <ecNumber evidence="1">2.3.1.20</ecNumber>
    </recommendedName>
    <alternativeName>
        <fullName>Putative triacylglycerol synthase MT1809</fullName>
    </alternativeName>
</protein>
<gene>
    <name type="ordered locus">MT1809</name>
</gene>
<organism>
    <name type="scientific">Mycobacterium tuberculosis (strain CDC 1551 / Oshkosh)</name>
    <dbReference type="NCBI Taxonomy" id="83331"/>
    <lineage>
        <taxon>Bacteria</taxon>
        <taxon>Bacillati</taxon>
        <taxon>Actinomycetota</taxon>
        <taxon>Actinomycetes</taxon>
        <taxon>Mycobacteriales</taxon>
        <taxon>Mycobacteriaceae</taxon>
        <taxon>Mycobacterium</taxon>
        <taxon>Mycobacterium tuberculosis complex</taxon>
    </lineage>
</organism>
<evidence type="ECO:0000250" key="1">
    <source>
        <dbReference type="UniProtKB" id="P9WKC9"/>
    </source>
</evidence>
<evidence type="ECO:0000255" key="2"/>
<evidence type="ECO:0000305" key="3"/>
<sequence>MPRGCAGARFACNACLNFLAGLGISEPISPGWAAMERLSGLDAFFLYMETPSQPLNVCCVLELDTSTMPGGYTYGRFHAALEKYVKAAPEFRMKLADTELNLDHPVWVDDDNFQIRHHLRRVAMPAPGGRRELAEICGYIAGLPLDRDRPLWEMWVIEGGARSDTVAVMLKVHHAVVDGVAGANLLSHLCSLQPDAPAPQPVRGTGGGNVLQIAASGLVGFASRPVRLATVVPATVLTLVRTLLRAREGRTMAAPFSAPPTPFNGPLGRLRNIAYTQLDMRDVKRVKDRFGVTINDVVVALCAGALRRFLLEHGVLPEAPLVATVPVSVHDKSDRPGRNQATWMFCRVPSQISDPAQRIRTIAAGNTVAKDHAAAIGPTLLHDWIQFGGSTMFGAAMRILPHISITHSPAYNLILSNVPGPQAQLYFLGCRMDSMFPLGPLLGNAGLNITVMSLNGELGVGIVSCPDLLPDLWGVADGFPEALKELLECSDDQPEGSNHQDS</sequence>
<name>Y1760_MYCTO</name>
<keyword id="KW-0012">Acyltransferase</keyword>
<keyword id="KW-0319">Glycerol metabolism</keyword>
<keyword id="KW-0444">Lipid biosynthesis</keyword>
<keyword id="KW-0443">Lipid metabolism</keyword>
<keyword id="KW-1185">Reference proteome</keyword>
<keyword id="KW-0808">Transferase</keyword>
<accession>P9WKB8</accession>
<accession>L0T7L6</accession>
<accession>O06795</accession>
<proteinExistence type="inferred from homology"/>